<comment type="function">
    <text evidence="1">Core subunit of the mitochondrial membrane respiratory chain NADH dehydrogenase (Complex I) which catalyzes electron transfer from NADH through the respiratory chain, using ubiquinone as an electron acceptor. Essential for the catalytic activity and assembly of complex I.</text>
</comment>
<comment type="catalytic activity">
    <reaction evidence="1">
        <text>a ubiquinone + NADH + 5 H(+)(in) = a ubiquinol + NAD(+) + 4 H(+)(out)</text>
        <dbReference type="Rhea" id="RHEA:29091"/>
        <dbReference type="Rhea" id="RHEA-COMP:9565"/>
        <dbReference type="Rhea" id="RHEA-COMP:9566"/>
        <dbReference type="ChEBI" id="CHEBI:15378"/>
        <dbReference type="ChEBI" id="CHEBI:16389"/>
        <dbReference type="ChEBI" id="CHEBI:17976"/>
        <dbReference type="ChEBI" id="CHEBI:57540"/>
        <dbReference type="ChEBI" id="CHEBI:57945"/>
        <dbReference type="EC" id="7.1.1.2"/>
    </reaction>
</comment>
<comment type="subunit">
    <text evidence="2">Core subunit of respiratory chain NADH dehydrogenase (Complex I) which is composed of 45 different subunits.</text>
</comment>
<comment type="subcellular location">
    <subcellularLocation>
        <location evidence="2">Mitochondrion inner membrane</location>
        <topology evidence="3">Multi-pass membrane protein</topology>
    </subcellularLocation>
</comment>
<comment type="similarity">
    <text evidence="4">Belongs to the complex I subunit 5 family.</text>
</comment>
<accession>Q36459</accession>
<reference key="1">
    <citation type="journal article" date="1996" name="J. Mol. Evol.">
        <title>The mitochondrial genome of a monotreme--the platypus (Ornithorhynchus anatinus).</title>
        <authorList>
            <person name="Janke A."/>
            <person name="Gemmell N.J."/>
            <person name="Feldmaier-Fuchs G."/>
            <person name="von Haeseler A."/>
            <person name="Paabo S."/>
        </authorList>
    </citation>
    <scope>NUCLEOTIDE SEQUENCE [LARGE SCALE GENOMIC DNA]</scope>
    <source>
        <strain evidence="5">Glennie</strain>
    </source>
</reference>
<organism>
    <name type="scientific">Ornithorhynchus anatinus</name>
    <name type="common">Duckbill platypus</name>
    <dbReference type="NCBI Taxonomy" id="9258"/>
    <lineage>
        <taxon>Eukaryota</taxon>
        <taxon>Metazoa</taxon>
        <taxon>Chordata</taxon>
        <taxon>Craniata</taxon>
        <taxon>Vertebrata</taxon>
        <taxon>Euteleostomi</taxon>
        <taxon>Mammalia</taxon>
        <taxon>Monotremata</taxon>
        <taxon>Ornithorhynchidae</taxon>
        <taxon>Ornithorhynchus</taxon>
    </lineage>
</organism>
<feature type="chain" id="PRO_0000118121" description="NADH-ubiquinone oxidoreductase chain 5">
    <location>
        <begin position="1"/>
        <end position="604"/>
    </location>
</feature>
<feature type="transmembrane region" description="Helical" evidence="3">
    <location>
        <begin position="4"/>
        <end position="24"/>
    </location>
</feature>
<feature type="transmembrane region" description="Helical" evidence="3">
    <location>
        <begin position="40"/>
        <end position="60"/>
    </location>
</feature>
<feature type="transmembrane region" description="Helical" evidence="3">
    <location>
        <begin position="88"/>
        <end position="108"/>
    </location>
</feature>
<feature type="transmembrane region" description="Helical" evidence="3">
    <location>
        <begin position="115"/>
        <end position="135"/>
    </location>
</feature>
<feature type="transmembrane region" description="Helical" evidence="3">
    <location>
        <begin position="138"/>
        <end position="158"/>
    </location>
</feature>
<feature type="transmembrane region" description="Helical" evidence="3">
    <location>
        <begin position="172"/>
        <end position="192"/>
    </location>
</feature>
<feature type="transmembrane region" description="Helical" evidence="3">
    <location>
        <begin position="201"/>
        <end position="221"/>
    </location>
</feature>
<feature type="transmembrane region" description="Helical" evidence="3">
    <location>
        <begin position="240"/>
        <end position="260"/>
    </location>
</feature>
<feature type="transmembrane region" description="Helical" evidence="3">
    <location>
        <begin position="272"/>
        <end position="292"/>
    </location>
</feature>
<feature type="transmembrane region" description="Helical" evidence="3">
    <location>
        <begin position="300"/>
        <end position="319"/>
    </location>
</feature>
<feature type="transmembrane region" description="Helical" evidence="3">
    <location>
        <begin position="324"/>
        <end position="346"/>
    </location>
</feature>
<feature type="transmembrane region" description="Helical" evidence="3">
    <location>
        <begin position="359"/>
        <end position="379"/>
    </location>
</feature>
<feature type="transmembrane region" description="Helical" evidence="3">
    <location>
        <begin position="410"/>
        <end position="430"/>
    </location>
</feature>
<feature type="transmembrane region" description="Helical" evidence="3">
    <location>
        <begin position="456"/>
        <end position="476"/>
    </location>
</feature>
<feature type="transmembrane region" description="Helical" evidence="3">
    <location>
        <begin position="481"/>
        <end position="501"/>
    </location>
</feature>
<feature type="transmembrane region" description="Helical" evidence="3">
    <location>
        <begin position="584"/>
        <end position="604"/>
    </location>
</feature>
<gene>
    <name type="primary">MT-ND5</name>
    <name type="synonym">MTND5</name>
    <name type="synonym">NADH5</name>
    <name type="synonym">ND5</name>
</gene>
<keyword id="KW-0249">Electron transport</keyword>
<keyword id="KW-0472">Membrane</keyword>
<keyword id="KW-0496">Mitochondrion</keyword>
<keyword id="KW-0999">Mitochondrion inner membrane</keyword>
<keyword id="KW-0520">NAD</keyword>
<keyword id="KW-1185">Reference proteome</keyword>
<keyword id="KW-0679">Respiratory chain</keyword>
<keyword id="KW-1278">Translocase</keyword>
<keyword id="KW-0812">Transmembrane</keyword>
<keyword id="KW-1133">Transmembrane helix</keyword>
<keyword id="KW-0813">Transport</keyword>
<keyword id="KW-0830">Ubiquinone</keyword>
<evidence type="ECO:0000250" key="1">
    <source>
        <dbReference type="UniProtKB" id="P03915"/>
    </source>
</evidence>
<evidence type="ECO:0000250" key="2">
    <source>
        <dbReference type="UniProtKB" id="P03920"/>
    </source>
</evidence>
<evidence type="ECO:0000255" key="3"/>
<evidence type="ECO:0000305" key="4"/>
<evidence type="ECO:0000312" key="5">
    <source>
        <dbReference type="Proteomes" id="UP000002279"/>
    </source>
</evidence>
<sequence length="604" mass="67439">MNLLFFSSLLTALIILCIPLLLSFTPYYKLENYPHHVKTMIMWSFIISLVPMLSFLNGGVEATVTNWHWFTTQTFNLSMNFKLDLYTIMFLPIALLITWSIMEFSIWYMSSDPKINQFMKYLLIFLITMLTLISANNLFQLFIGWEGVGIMSFMLIGWWHARTDANTAALQAILYNRIGDIGFILAMAWFLIHTNSWEFQQMFLLHTNLLPLLGLILAATGKSAQFGLHPWLPFAMEGPTPVSALLHSSTMVVAGIFLLVRFSPLLEQNSTALTMALCLGAITTLFTAACALTQNDIKKIIAFSTSSQLGLMMVTIGLNQPFLAFLHICTHAFFKAMLFLCSGSIIHNLNDEQDIRKMGGLINILPITSSALIIGSLALTGMPFLAGFYSKDLIIESLNTSNTNAWALSLTLVATTFTAVYSTRVIFLALLNQPRFSPASSINENNPLLINPIKRLAIGSILAGFLLTSYINPTTLTPTTMPPFIKVTALVITILGFILALELYLTTNNLTLKPHSQLHTFSNLLGYFPLIMHRKPTAQNFFLGQNMATMLIDLTWFEKSGPKGISSHQLTILTSVTEAQKGLMKIYFLSFLITPPIIITLLLF</sequence>
<name>NU5M_ORNAN</name>
<proteinExistence type="inferred from homology"/>
<geneLocation type="mitochondrion"/>
<dbReference type="EC" id="7.1.1.2" evidence="1"/>
<dbReference type="EMBL" id="X83427">
    <property type="protein sequence ID" value="CAA58452.1"/>
    <property type="molecule type" value="Genomic_DNA"/>
</dbReference>
<dbReference type="PIR" id="C58889">
    <property type="entry name" value="C58889"/>
</dbReference>
<dbReference type="RefSeq" id="NP_008053.1">
    <property type="nucleotide sequence ID" value="NC_000891.1"/>
</dbReference>
<dbReference type="SMR" id="Q36459"/>
<dbReference type="FunCoup" id="Q36459">
    <property type="interactions" value="496"/>
</dbReference>
<dbReference type="STRING" id="9258.ENSOANP00000024987"/>
<dbReference type="Ensembl" id="ENSOANT00000028486.2">
    <property type="protein sequence ID" value="ENSOANP00000024987.2"/>
    <property type="gene ID" value="ENSOANG00000019362.2"/>
</dbReference>
<dbReference type="GeneID" id="808701"/>
<dbReference type="KEGG" id="oaa:808701"/>
<dbReference type="CTD" id="4540"/>
<dbReference type="eggNOG" id="KOG4668">
    <property type="taxonomic scope" value="Eukaryota"/>
</dbReference>
<dbReference type="GeneTree" id="ENSGT00730000111303"/>
<dbReference type="InParanoid" id="Q36459"/>
<dbReference type="OMA" id="GVGIMSF"/>
<dbReference type="OrthoDB" id="10069788at2759"/>
<dbReference type="Proteomes" id="UP000002279">
    <property type="component" value="Mitochondrion"/>
</dbReference>
<dbReference type="Bgee" id="ENSOANG00000019362">
    <property type="expression patterns" value="Expressed in heart and 6 other cell types or tissues"/>
</dbReference>
<dbReference type="GO" id="GO:0005743">
    <property type="term" value="C:mitochondrial inner membrane"/>
    <property type="evidence" value="ECO:0000250"/>
    <property type="project" value="UniProtKB"/>
</dbReference>
<dbReference type="GO" id="GO:0045271">
    <property type="term" value="C:respiratory chain complex I"/>
    <property type="evidence" value="ECO:0000318"/>
    <property type="project" value="GO_Central"/>
</dbReference>
<dbReference type="GO" id="GO:0008137">
    <property type="term" value="F:NADH dehydrogenase (ubiquinone) activity"/>
    <property type="evidence" value="ECO:0000250"/>
    <property type="project" value="UniProtKB"/>
</dbReference>
<dbReference type="GO" id="GO:0015990">
    <property type="term" value="P:electron transport coupled proton transport"/>
    <property type="evidence" value="ECO:0000318"/>
    <property type="project" value="GO_Central"/>
</dbReference>
<dbReference type="GO" id="GO:0006120">
    <property type="term" value="P:mitochondrial electron transport, NADH to ubiquinone"/>
    <property type="evidence" value="ECO:0000250"/>
    <property type="project" value="UniProtKB"/>
</dbReference>
<dbReference type="GO" id="GO:0032981">
    <property type="term" value="P:mitochondrial respiratory chain complex I assembly"/>
    <property type="evidence" value="ECO:0000250"/>
    <property type="project" value="UniProtKB"/>
</dbReference>
<dbReference type="InterPro" id="IPR010934">
    <property type="entry name" value="NADH_DH_su5_C"/>
</dbReference>
<dbReference type="InterPro" id="IPR018393">
    <property type="entry name" value="NADHpl_OxRdtase_5_subgr"/>
</dbReference>
<dbReference type="InterPro" id="IPR001750">
    <property type="entry name" value="ND/Mrp_TM"/>
</dbReference>
<dbReference type="InterPro" id="IPR003945">
    <property type="entry name" value="NU5C-like"/>
</dbReference>
<dbReference type="InterPro" id="IPR001516">
    <property type="entry name" value="Proton_antipo_N"/>
</dbReference>
<dbReference type="NCBIfam" id="TIGR01974">
    <property type="entry name" value="NDH_I_L"/>
    <property type="match status" value="1"/>
</dbReference>
<dbReference type="PANTHER" id="PTHR42829">
    <property type="entry name" value="NADH-UBIQUINONE OXIDOREDUCTASE CHAIN 5"/>
    <property type="match status" value="1"/>
</dbReference>
<dbReference type="PANTHER" id="PTHR42829:SF2">
    <property type="entry name" value="NADH-UBIQUINONE OXIDOREDUCTASE CHAIN 5"/>
    <property type="match status" value="1"/>
</dbReference>
<dbReference type="Pfam" id="PF06455">
    <property type="entry name" value="NADH5_C"/>
    <property type="match status" value="1"/>
</dbReference>
<dbReference type="Pfam" id="PF00361">
    <property type="entry name" value="Proton_antipo_M"/>
    <property type="match status" value="1"/>
</dbReference>
<dbReference type="Pfam" id="PF00662">
    <property type="entry name" value="Proton_antipo_N"/>
    <property type="match status" value="1"/>
</dbReference>
<dbReference type="PRINTS" id="PR01434">
    <property type="entry name" value="NADHDHGNASE5"/>
</dbReference>
<protein>
    <recommendedName>
        <fullName>NADH-ubiquinone oxidoreductase chain 5</fullName>
        <ecNumber evidence="1">7.1.1.2</ecNumber>
    </recommendedName>
    <alternativeName>
        <fullName>NADH dehydrogenase subunit 5</fullName>
    </alternativeName>
</protein>